<organism>
    <name type="scientific">Zea mays</name>
    <name type="common">Maize</name>
    <dbReference type="NCBI Taxonomy" id="4577"/>
    <lineage>
        <taxon>Eukaryota</taxon>
        <taxon>Viridiplantae</taxon>
        <taxon>Streptophyta</taxon>
        <taxon>Embryophyta</taxon>
        <taxon>Tracheophyta</taxon>
        <taxon>Spermatophyta</taxon>
        <taxon>Magnoliopsida</taxon>
        <taxon>Liliopsida</taxon>
        <taxon>Poales</taxon>
        <taxon>Poaceae</taxon>
        <taxon>PACMAD clade</taxon>
        <taxon>Panicoideae</taxon>
        <taxon>Andropogonodae</taxon>
        <taxon>Andropogoneae</taxon>
        <taxon>Tripsacinae</taxon>
        <taxon>Zea</taxon>
    </lineage>
</organism>
<evidence type="ECO:0000256" key="1">
    <source>
        <dbReference type="SAM" id="MobiDB-lite"/>
    </source>
</evidence>
<evidence type="ECO:0000269" key="2">
    <source>
    </source>
</evidence>
<evidence type="ECO:0000303" key="3">
    <source>
    </source>
</evidence>
<evidence type="ECO:0000305" key="4"/>
<evidence type="ECO:0000312" key="5">
    <source>
        <dbReference type="EMBL" id="ONM23008.1"/>
    </source>
</evidence>
<comment type="function">
    <text evidence="2">Involved in the regulation of leaf growth angle (PubMed:21687735). Promotes horizontal shoot growth (PubMed:21687735).</text>
</comment>
<comment type="tissue specificity">
    <text evidence="2">Highly expressed in leaf sheath pulvinus (PubMed:21687735). Expressed in shoot apical meristem and leaves (PubMed:21687735).</text>
</comment>
<comment type="similarity">
    <text evidence="4">Belongs to the TAC family.</text>
</comment>
<sequence>MGLKVFHWLNRRMHSNTEYCSIHGSKAMEDKDSVPHSVVEKDTEALLLHDVLLNGILAIGTLGHHVDSLCPVACIEEDDLFIMDDEKAIVEERDDEEPRNDQVKEDVALETEPCEPVWPIVEPAKMHSLSMKEDNFTCFVAEEILIREVEDGGGANIQERPLLMLEKVEKVRTTLADLFAAEVFSSSSPREYSCQDIIDVAVASTSKHASCMEKMHQKKPRKPTPKPLKATRKLSRVMRKMLGKKIHPEQLNGRSNAEGPLTA</sequence>
<keyword id="KW-0341">Growth regulation</keyword>
<keyword id="KW-1185">Reference proteome</keyword>
<name>TAC1_MAIZE</name>
<protein>
    <recommendedName>
        <fullName evidence="3">Protein TILLER ANGLE CONTROL 1</fullName>
        <shortName evidence="3">ZmTAC1</shortName>
    </recommendedName>
    <alternativeName>
        <fullName evidence="3">Leaf angle-associated protein</fullName>
    </alternativeName>
</protein>
<accession>C4IZI7</accession>
<accession>B6TNA2</accession>
<feature type="chain" id="PRO_0000451028" description="Protein TILLER ANGLE CONTROL 1">
    <location>
        <begin position="1"/>
        <end position="263"/>
    </location>
</feature>
<feature type="region of interest" description="Disordered" evidence="1">
    <location>
        <begin position="243"/>
        <end position="263"/>
    </location>
</feature>
<feature type="short sequence motif" description="IGT motif" evidence="4">
    <location>
        <begin position="55"/>
        <end position="61"/>
    </location>
</feature>
<feature type="sequence conflict" description="In Ref. 3; ACG38585." evidence="4" ref="3">
    <original>S</original>
    <variation>P</variation>
    <location>
        <position position="15"/>
    </location>
</feature>
<feature type="sequence conflict" description="In Ref. 3; ACG38585." evidence="4" ref="3">
    <original>I</original>
    <variation>T</variation>
    <location>
        <position position="82"/>
    </location>
</feature>
<gene>
    <name evidence="3" type="primary">TAC1</name>
    <name evidence="3" type="synonym">LAT1</name>
    <name evidence="5" type="ORF">ZEAMMB73_Zm00001d006184</name>
</gene>
<proteinExistence type="evidence at transcript level"/>
<reference key="1">
    <citation type="journal article" date="2011" name="PLoS ONE">
        <title>Cloning and characterization of a putative TAC1 ortholog associated with leaf angle in maize (Zea mays L.).</title>
        <authorList>
            <person name="Ku L."/>
            <person name="Wei X."/>
            <person name="Zhang S."/>
            <person name="Zhang J."/>
            <person name="Guo S."/>
            <person name="Chen Y."/>
        </authorList>
    </citation>
    <scope>NUCLEOTIDE SEQUENCE [MRNA]</scope>
    <scope>FUNCTION</scope>
    <scope>TISSUE SPECIFICITY</scope>
</reference>
<reference key="2">
    <citation type="journal article" date="2009" name="Science">
        <title>The B73 maize genome: complexity, diversity, and dynamics.</title>
        <authorList>
            <person name="Schnable P.S."/>
            <person name="Ware D."/>
            <person name="Fulton R.S."/>
            <person name="Stein J.C."/>
            <person name="Wei F."/>
            <person name="Pasternak S."/>
            <person name="Liang C."/>
            <person name="Zhang J."/>
            <person name="Fulton L."/>
            <person name="Graves T.A."/>
            <person name="Minx P."/>
            <person name="Reily A.D."/>
            <person name="Courtney L."/>
            <person name="Kruchowski S.S."/>
            <person name="Tomlinson C."/>
            <person name="Strong C."/>
            <person name="Delehaunty K."/>
            <person name="Fronick C."/>
            <person name="Courtney B."/>
            <person name="Rock S.M."/>
            <person name="Belter E."/>
            <person name="Du F."/>
            <person name="Kim K."/>
            <person name="Abbott R.M."/>
            <person name="Cotton M."/>
            <person name="Levy A."/>
            <person name="Marchetto P."/>
            <person name="Ochoa K."/>
            <person name="Jackson S.M."/>
            <person name="Gillam B."/>
            <person name="Chen W."/>
            <person name="Yan L."/>
            <person name="Higginbotham J."/>
            <person name="Cardenas M."/>
            <person name="Waligorski J."/>
            <person name="Applebaum E."/>
            <person name="Phelps L."/>
            <person name="Falcone J."/>
            <person name="Kanchi K."/>
            <person name="Thane T."/>
            <person name="Scimone A."/>
            <person name="Thane N."/>
            <person name="Henke J."/>
            <person name="Wang T."/>
            <person name="Ruppert J."/>
            <person name="Shah N."/>
            <person name="Rotter K."/>
            <person name="Hodges J."/>
            <person name="Ingenthron E."/>
            <person name="Cordes M."/>
            <person name="Kohlberg S."/>
            <person name="Sgro J."/>
            <person name="Delgado B."/>
            <person name="Mead K."/>
            <person name="Chinwalla A."/>
            <person name="Leonard S."/>
            <person name="Crouse K."/>
            <person name="Collura K."/>
            <person name="Kudrna D."/>
            <person name="Currie J."/>
            <person name="He R."/>
            <person name="Angelova A."/>
            <person name="Rajasekar S."/>
            <person name="Mueller T."/>
            <person name="Lomeli R."/>
            <person name="Scara G."/>
            <person name="Ko A."/>
            <person name="Delaney K."/>
            <person name="Wissotski M."/>
            <person name="Lopez G."/>
            <person name="Campos D."/>
            <person name="Braidotti M."/>
            <person name="Ashley E."/>
            <person name="Golser W."/>
            <person name="Kim H."/>
            <person name="Lee S."/>
            <person name="Lin J."/>
            <person name="Dujmic Z."/>
            <person name="Kim W."/>
            <person name="Talag J."/>
            <person name="Zuccolo A."/>
            <person name="Fan C."/>
            <person name="Sebastian A."/>
            <person name="Kramer M."/>
            <person name="Spiegel L."/>
            <person name="Nascimento L."/>
            <person name="Zutavern T."/>
            <person name="Miller B."/>
            <person name="Ambroise C."/>
            <person name="Muller S."/>
            <person name="Spooner W."/>
            <person name="Narechania A."/>
            <person name="Ren L."/>
            <person name="Wei S."/>
            <person name="Kumari S."/>
            <person name="Faga B."/>
            <person name="Levy M.J."/>
            <person name="McMahan L."/>
            <person name="Van Buren P."/>
            <person name="Vaughn M.W."/>
            <person name="Ying K."/>
            <person name="Yeh C.-T."/>
            <person name="Emrich S.J."/>
            <person name="Jia Y."/>
            <person name="Kalyanaraman A."/>
            <person name="Hsia A.-P."/>
            <person name="Barbazuk W.B."/>
            <person name="Baucom R.S."/>
            <person name="Brutnell T.P."/>
            <person name="Carpita N.C."/>
            <person name="Chaparro C."/>
            <person name="Chia J.-M."/>
            <person name="Deragon J.-M."/>
            <person name="Estill J.C."/>
            <person name="Fu Y."/>
            <person name="Jeddeloh J.A."/>
            <person name="Han Y."/>
            <person name="Lee H."/>
            <person name="Li P."/>
            <person name="Lisch D.R."/>
            <person name="Liu S."/>
            <person name="Liu Z."/>
            <person name="Nagel D.H."/>
            <person name="McCann M.C."/>
            <person name="SanMiguel P."/>
            <person name="Myers A.M."/>
            <person name="Nettleton D."/>
            <person name="Nguyen J."/>
            <person name="Penning B.W."/>
            <person name="Ponnala L."/>
            <person name="Schneider K.L."/>
            <person name="Schwartz D.C."/>
            <person name="Sharma A."/>
            <person name="Soderlund C."/>
            <person name="Springer N.M."/>
            <person name="Sun Q."/>
            <person name="Wang H."/>
            <person name="Waterman M."/>
            <person name="Westerman R."/>
            <person name="Wolfgruber T.K."/>
            <person name="Yang L."/>
            <person name="Yu Y."/>
            <person name="Zhang L."/>
            <person name="Zhou S."/>
            <person name="Zhu Q."/>
            <person name="Bennetzen J.L."/>
            <person name="Dawe R.K."/>
            <person name="Jiang J."/>
            <person name="Jiang N."/>
            <person name="Presting G.G."/>
            <person name="Wessler S.R."/>
            <person name="Aluru S."/>
            <person name="Martienssen R.A."/>
            <person name="Clifton S.W."/>
            <person name="McCombie W.R."/>
            <person name="Wing R.A."/>
            <person name="Wilson R.K."/>
        </authorList>
    </citation>
    <scope>NUCLEOTIDE SEQUENCE [LARGE SCALE GENOMIC DNA]</scope>
    <source>
        <strain>cv. B73</strain>
    </source>
</reference>
<reference key="3">
    <citation type="journal article" date="2009" name="Plant Mol. Biol.">
        <title>Insights into corn genes derived from large-scale cDNA sequencing.</title>
        <authorList>
            <person name="Alexandrov N.N."/>
            <person name="Brover V.V."/>
            <person name="Freidin S."/>
            <person name="Troukhan M.E."/>
            <person name="Tatarinova T.V."/>
            <person name="Zhang H."/>
            <person name="Swaller T.J."/>
            <person name="Lu Y.-P."/>
            <person name="Bouck J."/>
            <person name="Flavell R.B."/>
            <person name="Feldmann K.A."/>
        </authorList>
    </citation>
    <scope>NUCLEOTIDE SEQUENCE [LARGE SCALE MRNA]</scope>
</reference>
<reference key="4">
    <citation type="journal article" date="2009" name="PLoS Genet.">
        <title>Sequencing, mapping, and analysis of 27,455 maize full-length cDNAs.</title>
        <authorList>
            <person name="Soderlund C."/>
            <person name="Descour A."/>
            <person name="Kudrna D."/>
            <person name="Bomhoff M."/>
            <person name="Boyd L."/>
            <person name="Currie J."/>
            <person name="Angelova A."/>
            <person name="Collura K."/>
            <person name="Wissotski M."/>
            <person name="Ashley E."/>
            <person name="Morrow D."/>
            <person name="Fernandes J."/>
            <person name="Walbot V."/>
            <person name="Yu Y."/>
        </authorList>
    </citation>
    <scope>NUCLEOTIDE SEQUENCE [LARGE SCALE MRNA]</scope>
    <source>
        <strain>cv. B73</strain>
    </source>
</reference>
<dbReference type="EMBL" id="GQ450293">
    <property type="protein sequence ID" value="ACV41806.1"/>
    <property type="molecule type" value="mRNA"/>
</dbReference>
<dbReference type="EMBL" id="CM007648">
    <property type="protein sequence ID" value="ONM23008.1"/>
    <property type="molecule type" value="Genomic_DNA"/>
</dbReference>
<dbReference type="EMBL" id="EU966467">
    <property type="protein sequence ID" value="ACG38585.1"/>
    <property type="molecule type" value="mRNA"/>
</dbReference>
<dbReference type="EMBL" id="BT083984">
    <property type="protein sequence ID" value="ACR34337.1"/>
    <property type="molecule type" value="mRNA"/>
</dbReference>
<dbReference type="RefSeq" id="NP_001144193.1">
    <property type="nucleotide sequence ID" value="NM_001150721.1"/>
</dbReference>
<dbReference type="RefSeq" id="NP_001170644.1">
    <property type="nucleotide sequence ID" value="NM_001177173.1"/>
</dbReference>
<dbReference type="FunCoup" id="C4IZI7">
    <property type="interactions" value="333"/>
</dbReference>
<dbReference type="IntAct" id="C4IZI7">
    <property type="interactions" value="2"/>
</dbReference>
<dbReference type="STRING" id="4577.C4IZI7"/>
<dbReference type="PaxDb" id="4577-GRMZM2G447987_P01"/>
<dbReference type="EnsemblPlants" id="Zm00001eb103250_T002">
    <property type="protein sequence ID" value="Zm00001eb103250_P002"/>
    <property type="gene ID" value="Zm00001eb103250"/>
</dbReference>
<dbReference type="GeneID" id="100277053"/>
<dbReference type="Gramene" id="Zm00001eb103250_T002">
    <property type="protein sequence ID" value="Zm00001eb103250_P002"/>
    <property type="gene ID" value="Zm00001eb103250"/>
</dbReference>
<dbReference type="KEGG" id="zma:100277053"/>
<dbReference type="eggNOG" id="ENOG502S8UA">
    <property type="taxonomic scope" value="Eukaryota"/>
</dbReference>
<dbReference type="HOGENOM" id="CLU_079213_0_0_1"/>
<dbReference type="InParanoid" id="C4IZI7"/>
<dbReference type="OMA" id="ACHEQDE"/>
<dbReference type="OrthoDB" id="1922866at2759"/>
<dbReference type="Proteomes" id="UP000007305">
    <property type="component" value="Chromosome 2"/>
</dbReference>
<dbReference type="ExpressionAtlas" id="C4IZI7">
    <property type="expression patterns" value="baseline and differential"/>
</dbReference>
<dbReference type="GO" id="GO:0001763">
    <property type="term" value="P:morphogenesis of a branching structure"/>
    <property type="evidence" value="ECO:0000315"/>
    <property type="project" value="UniProtKB"/>
</dbReference>
<dbReference type="GO" id="GO:0060771">
    <property type="term" value="P:phyllotactic patterning"/>
    <property type="evidence" value="ECO:0000315"/>
    <property type="project" value="UniProtKB"/>
</dbReference>
<dbReference type="InterPro" id="IPR044989">
    <property type="entry name" value="TAC1"/>
</dbReference>
<dbReference type="PANTHER" id="PTHR38366">
    <property type="entry name" value="NAD-DEPENDENT PROTEIN DEACETYLASE HST1-LIKE PROTEIN"/>
    <property type="match status" value="1"/>
</dbReference>
<dbReference type="PANTHER" id="PTHR38366:SF1">
    <property type="entry name" value="PROTEIN TILLER ANGLE CONTROL 1"/>
    <property type="match status" value="1"/>
</dbReference>